<keyword id="KW-0325">Glycoprotein</keyword>
<keyword id="KW-0472">Membrane</keyword>
<keyword id="KW-1185">Reference proteome</keyword>
<keyword id="KW-0812">Transmembrane</keyword>
<keyword id="KW-1133">Transmembrane helix</keyword>
<keyword id="KW-0813">Transport</keyword>
<comment type="function">
    <text evidence="6">Major facilitator-type transporter; part of the gene cluster that mediates the biosynthesis of sorbicillinoids, a diverse group of yellow secondary metabolites that restrict growth of competing pathogenic fungi but not of bacteria (PubMed:29104566).</text>
</comment>
<comment type="subcellular location">
    <subcellularLocation>
        <location evidence="1">Membrane</location>
        <topology evidence="1">Multi-pass membrane protein</topology>
    </subcellularLocation>
</comment>
<comment type="induction">
    <text evidence="3">The promoter contains putative CRE1 binding motifs 5'-SYGGRG-3' and expression is differentially regulated in light and darkness by CRE1 (PubMed:28809958). Photoreceptors BLR1 and BLR2 negatively regulate the expression, while ENV1 exerts positive regulation (PubMed:28809958).</text>
</comment>
<comment type="disruption phenotype">
    <text evidence="3">Abolishes production of trichodimerol and dihydrotrichotetronin in darkness (PubMed:28809958). Also impacts production of paracelsin in a light dependent manner, with decreased paracelsin levels in light, but likely in an indirect way (PubMed:28809958).</text>
</comment>
<comment type="similarity">
    <text evidence="5">Belongs to the major facilitator superfamily. Sugar transporter (TC 2.A.1.1) family.</text>
</comment>
<feature type="chain" id="PRO_0000443848" description="Major facilitator-type transporter sor6">
    <location>
        <begin position="1"/>
        <end position="534"/>
    </location>
</feature>
<feature type="transmembrane region" description="Helical" evidence="1">
    <location>
        <begin position="66"/>
        <end position="86"/>
    </location>
</feature>
<feature type="transmembrane region" description="Helical" evidence="1">
    <location>
        <begin position="103"/>
        <end position="123"/>
    </location>
</feature>
<feature type="transmembrane region" description="Helical" evidence="1">
    <location>
        <begin position="160"/>
        <end position="180"/>
    </location>
</feature>
<feature type="transmembrane region" description="Helical" evidence="1">
    <location>
        <begin position="182"/>
        <end position="202"/>
    </location>
</feature>
<feature type="transmembrane region" description="Helical" evidence="1">
    <location>
        <begin position="209"/>
        <end position="229"/>
    </location>
</feature>
<feature type="transmembrane region" description="Helical" evidence="1">
    <location>
        <begin position="241"/>
        <end position="261"/>
    </location>
</feature>
<feature type="transmembrane region" description="Helical" evidence="1">
    <location>
        <begin position="318"/>
        <end position="338"/>
    </location>
</feature>
<feature type="transmembrane region" description="Helical" evidence="1">
    <location>
        <begin position="354"/>
        <end position="374"/>
    </location>
</feature>
<feature type="transmembrane region" description="Helical" evidence="1">
    <location>
        <begin position="395"/>
        <end position="415"/>
    </location>
</feature>
<feature type="transmembrane region" description="Helical" evidence="1">
    <location>
        <begin position="424"/>
        <end position="444"/>
    </location>
</feature>
<feature type="transmembrane region" description="Helical" evidence="1">
    <location>
        <begin position="456"/>
        <end position="476"/>
    </location>
</feature>
<feature type="transmembrane region" description="Helical" evidence="1">
    <location>
        <begin position="486"/>
        <end position="506"/>
    </location>
</feature>
<feature type="glycosylation site" description="N-linked (GlcNAc...) asparagine" evidence="2">
    <location>
        <position position="29"/>
    </location>
</feature>
<feature type="glycosylation site" description="N-linked (GlcNAc...) asparagine" evidence="2">
    <location>
        <position position="36"/>
    </location>
</feature>
<dbReference type="EMBL" id="GL985056">
    <property type="protein sequence ID" value="EGR52691.1"/>
    <property type="molecule type" value="Genomic_DNA"/>
</dbReference>
<dbReference type="RefSeq" id="XP_006961063.1">
    <property type="nucleotide sequence ID" value="XM_006961001.1"/>
</dbReference>
<dbReference type="STRING" id="431241.G0R6T1"/>
<dbReference type="GlyCosmos" id="G0R6T1">
    <property type="glycosylation" value="2 sites, No reported glycans"/>
</dbReference>
<dbReference type="EnsemblFungi" id="EGR52691">
    <property type="protein sequence ID" value="EGR52691"/>
    <property type="gene ID" value="TRIREDRAFT_43701"/>
</dbReference>
<dbReference type="GeneID" id="18484938"/>
<dbReference type="KEGG" id="tre:TRIREDRAFT_43701"/>
<dbReference type="VEuPathDB" id="FungiDB:TRIREDRAFT_43701"/>
<dbReference type="eggNOG" id="KOG0255">
    <property type="taxonomic scope" value="Eukaryota"/>
</dbReference>
<dbReference type="HOGENOM" id="CLU_008455_11_6_1"/>
<dbReference type="OrthoDB" id="446368at2759"/>
<dbReference type="Proteomes" id="UP000008984">
    <property type="component" value="Unassembled WGS sequence"/>
</dbReference>
<dbReference type="GO" id="GO:0005886">
    <property type="term" value="C:plasma membrane"/>
    <property type="evidence" value="ECO:0007669"/>
    <property type="project" value="TreeGrafter"/>
</dbReference>
<dbReference type="GO" id="GO:0022857">
    <property type="term" value="F:transmembrane transporter activity"/>
    <property type="evidence" value="ECO:0007669"/>
    <property type="project" value="InterPro"/>
</dbReference>
<dbReference type="CDD" id="cd17323">
    <property type="entry name" value="MFS_Tpo1_MDR_like"/>
    <property type="match status" value="1"/>
</dbReference>
<dbReference type="FunFam" id="1.20.1250.20:FF:000011">
    <property type="entry name" value="MFS multidrug transporter, putative"/>
    <property type="match status" value="1"/>
</dbReference>
<dbReference type="Gene3D" id="1.20.1250.20">
    <property type="entry name" value="MFS general substrate transporter like domains"/>
    <property type="match status" value="1"/>
</dbReference>
<dbReference type="InterPro" id="IPR011701">
    <property type="entry name" value="MFS"/>
</dbReference>
<dbReference type="InterPro" id="IPR020846">
    <property type="entry name" value="MFS_dom"/>
</dbReference>
<dbReference type="InterPro" id="IPR036259">
    <property type="entry name" value="MFS_trans_sf"/>
</dbReference>
<dbReference type="PANTHER" id="PTHR23502">
    <property type="entry name" value="MAJOR FACILITATOR SUPERFAMILY"/>
    <property type="match status" value="1"/>
</dbReference>
<dbReference type="PANTHER" id="PTHR23502:SF158">
    <property type="entry name" value="MULTIDRUG TRANSPORTER, PUTATIVE (AFU_ORTHOLOGUE AFUA_3G01890)-RELATED"/>
    <property type="match status" value="1"/>
</dbReference>
<dbReference type="Pfam" id="PF07690">
    <property type="entry name" value="MFS_1"/>
    <property type="match status" value="1"/>
</dbReference>
<dbReference type="SUPFAM" id="SSF103473">
    <property type="entry name" value="MFS general substrate transporter"/>
    <property type="match status" value="1"/>
</dbReference>
<dbReference type="PROSITE" id="PS50850">
    <property type="entry name" value="MFS"/>
    <property type="match status" value="1"/>
</dbReference>
<evidence type="ECO:0000255" key="1"/>
<evidence type="ECO:0000255" key="2">
    <source>
        <dbReference type="PROSITE-ProRule" id="PRU00498"/>
    </source>
</evidence>
<evidence type="ECO:0000269" key="3">
    <source>
    </source>
</evidence>
<evidence type="ECO:0000303" key="4">
    <source>
    </source>
</evidence>
<evidence type="ECO:0000305" key="5"/>
<evidence type="ECO:0000305" key="6">
    <source>
    </source>
</evidence>
<accession>G0R6T1</accession>
<reference key="1">
    <citation type="journal article" date="2008" name="Nat. Biotechnol.">
        <title>Genome sequencing and analysis of the biomass-degrading fungus Trichoderma reesei (syn. Hypocrea jecorina).</title>
        <authorList>
            <person name="Martinez D."/>
            <person name="Berka R.M."/>
            <person name="Henrissat B."/>
            <person name="Saloheimo M."/>
            <person name="Arvas M."/>
            <person name="Baker S.E."/>
            <person name="Chapman J."/>
            <person name="Chertkov O."/>
            <person name="Coutinho P.M."/>
            <person name="Cullen D."/>
            <person name="Danchin E.G."/>
            <person name="Grigoriev I.V."/>
            <person name="Harris P."/>
            <person name="Jackson M."/>
            <person name="Kubicek C.P."/>
            <person name="Han C.S."/>
            <person name="Ho I."/>
            <person name="Larrondo L.F."/>
            <person name="de Leon A.L."/>
            <person name="Magnuson J.K."/>
            <person name="Merino S."/>
            <person name="Misra M."/>
            <person name="Nelson B."/>
            <person name="Putnam N."/>
            <person name="Robbertse B."/>
            <person name="Salamov A.A."/>
            <person name="Schmoll M."/>
            <person name="Terry A."/>
            <person name="Thayer N."/>
            <person name="Westerholm-Parvinen A."/>
            <person name="Schoch C.L."/>
            <person name="Yao J."/>
            <person name="Barabote R."/>
            <person name="Nelson M.A."/>
            <person name="Detter C."/>
            <person name="Bruce D."/>
            <person name="Kuske C.R."/>
            <person name="Xie G."/>
            <person name="Richardson P."/>
            <person name="Rokhsar D.S."/>
            <person name="Lucas S.M."/>
            <person name="Rubin E.M."/>
            <person name="Dunn-Coleman N."/>
            <person name="Ward M."/>
            <person name="Brettin T.S."/>
        </authorList>
    </citation>
    <scope>NUCLEOTIDE SEQUENCE [LARGE SCALE GENOMIC DNA]</scope>
    <source>
        <strain>QM6a</strain>
    </source>
</reference>
<reference key="2">
    <citation type="journal article" date="2016" name="BMC Evol. Biol.">
        <title>Several steps of lateral gene transfer followed by events of 'birth-and-death' evolution shaped a fungal sorbicillinoid biosynthetic gene cluster.</title>
        <authorList>
            <person name="Druzhinina I.S."/>
            <person name="Kubicek E.M."/>
            <person name="Kubicek C.P."/>
        </authorList>
    </citation>
    <scope>IDENTIFICATION</scope>
</reference>
<reference key="3">
    <citation type="journal article" date="2017" name="Front. Microbiol.">
        <title>In vivo study of the sorbicillinoid gene cluster in Trichoderma reesei.</title>
        <authorList>
            <person name="Derntl C."/>
            <person name="Guzman-Chavez F."/>
            <person name="Mello-de-Sousa T.M."/>
            <person name="Busse H.J."/>
            <person name="Driessen A.J.M."/>
            <person name="Mach R.L."/>
            <person name="Mach-Aigner A.R."/>
        </authorList>
    </citation>
    <scope>FUNCTION</scope>
</reference>
<reference key="4">
    <citation type="journal article" date="2017" name="PLoS ONE">
        <title>A CRE1-regulated cluster is responsible for light dependent production of dihydrotrichotetronin in Trichoderma reesei.</title>
        <authorList>
            <person name="Monroy A.A."/>
            <person name="Stappler E."/>
            <person name="Schuster A."/>
            <person name="Sulyok M."/>
            <person name="Schmoll M."/>
        </authorList>
    </citation>
    <scope>FUNCTION</scope>
    <scope>INDUCTION</scope>
    <scope>DISRUPTION PHENOTYPE</scope>
</reference>
<name>SORT_HYPJQ</name>
<organism>
    <name type="scientific">Hypocrea jecorina (strain QM6a)</name>
    <name type="common">Trichoderma reesei</name>
    <dbReference type="NCBI Taxonomy" id="431241"/>
    <lineage>
        <taxon>Eukaryota</taxon>
        <taxon>Fungi</taxon>
        <taxon>Dikarya</taxon>
        <taxon>Ascomycota</taxon>
        <taxon>Pezizomycotina</taxon>
        <taxon>Sordariomycetes</taxon>
        <taxon>Hypocreomycetidae</taxon>
        <taxon>Hypocreales</taxon>
        <taxon>Hypocreaceae</taxon>
        <taxon>Trichoderma</taxon>
    </lineage>
</organism>
<sequence>MSKEASQDSRSITPVEAVEPLEVVDAEKNVTTSPYNGSGTVEDPFIVEFQQDDKSNPMNWGQFRKWFLTSIVTFSVFAVTFTSSAYSVSAEEIMTEFDISSTLFITGVSVFVLGFAIGPAVWGPLVTPHDERSNANRASLQSTRSELYGRQMPWIASHTAMVAFMAGSAGSPNIATLIVLRFLAGTFGGSPLVNSGGAIADLFPPAQRGLAMTIYCVAPFLGPILGPIVGGFATEYIGWRWVQGMCTIFIGVIGIIGVIFVPETYGPVLLQRKANALSKADGKVYISVLQKNQGKKQPSEVFGRALIRPWVLLFREPIVLIASLYMAIIYGTVYMFLGAMPIVYNELRGWSPGFGGLAFLGMMVGIIIGLGYAIWDNNGRYMKLDPSKRTAESRLPPAIAGAVALPIGMFAFAWTNYPSIHWAVSIVLSAPFGFGVVLVILPIVNYLIDSYTVYAASVLAAAAVFRSIMGAVFPLFTSQMYHNLGIHWATSIPAFLTLVCMPFPFFMYRYGAVVREKCKYAAEAAQIMKKMQGR</sequence>
<proteinExistence type="evidence at transcript level"/>
<protein>
    <recommendedName>
        <fullName evidence="4">Major facilitator-type transporter sor6</fullName>
    </recommendedName>
    <alternativeName>
        <fullName evidence="4">Sorbicillinoid biosynthetic cluster protein 6</fullName>
    </alternativeName>
</protein>
<gene>
    <name evidence="4" type="primary">sor6</name>
    <name type="ORF">TRIREDRAFT_43701</name>
</gene>